<keyword id="KW-0067">ATP-binding</keyword>
<keyword id="KW-0963">Cytoplasm</keyword>
<keyword id="KW-0436">Ligase</keyword>
<keyword id="KW-0460">Magnesium</keyword>
<keyword id="KW-0479">Metal-binding</keyword>
<keyword id="KW-0547">Nucleotide-binding</keyword>
<keyword id="KW-0658">Purine biosynthesis</keyword>
<protein>
    <recommendedName>
        <fullName evidence="1">Phosphoribosylformylglycinamidine synthase subunit PurL</fullName>
        <shortName evidence="1">FGAM synthase</shortName>
        <ecNumber evidence="1">6.3.5.3</ecNumber>
    </recommendedName>
    <alternativeName>
        <fullName evidence="1">Formylglycinamide ribonucleotide amidotransferase subunit II</fullName>
        <shortName evidence="1">FGAR amidotransferase II</shortName>
        <shortName evidence="1">FGAR-AT II</shortName>
    </alternativeName>
    <alternativeName>
        <fullName evidence="1">Glutamine amidotransferase PurL</fullName>
    </alternativeName>
    <alternativeName>
        <fullName evidence="1">Phosphoribosylformylglycinamidine synthase subunit II</fullName>
    </alternativeName>
</protein>
<comment type="function">
    <text evidence="1">Part of the phosphoribosylformylglycinamidine synthase complex involved in the purines biosynthetic pathway. Catalyzes the ATP-dependent conversion of formylglycinamide ribonucleotide (FGAR) and glutamine to yield formylglycinamidine ribonucleotide (FGAM) and glutamate. The FGAM synthase complex is composed of three subunits. PurQ produces an ammonia molecule by converting glutamine to glutamate. PurL transfers the ammonia molecule to FGAR to form FGAM in an ATP-dependent manner. PurS interacts with PurQ and PurL and is thought to assist in the transfer of the ammonia molecule from PurQ to PurL.</text>
</comment>
<comment type="catalytic activity">
    <reaction evidence="1">
        <text>N(2)-formyl-N(1)-(5-phospho-beta-D-ribosyl)glycinamide + L-glutamine + ATP + H2O = 2-formamido-N(1)-(5-O-phospho-beta-D-ribosyl)acetamidine + L-glutamate + ADP + phosphate + H(+)</text>
        <dbReference type="Rhea" id="RHEA:17129"/>
        <dbReference type="ChEBI" id="CHEBI:15377"/>
        <dbReference type="ChEBI" id="CHEBI:15378"/>
        <dbReference type="ChEBI" id="CHEBI:29985"/>
        <dbReference type="ChEBI" id="CHEBI:30616"/>
        <dbReference type="ChEBI" id="CHEBI:43474"/>
        <dbReference type="ChEBI" id="CHEBI:58359"/>
        <dbReference type="ChEBI" id="CHEBI:147286"/>
        <dbReference type="ChEBI" id="CHEBI:147287"/>
        <dbReference type="ChEBI" id="CHEBI:456216"/>
        <dbReference type="EC" id="6.3.5.3"/>
    </reaction>
</comment>
<comment type="pathway">
    <text evidence="1">Purine metabolism; IMP biosynthesis via de novo pathway; 5-amino-1-(5-phospho-D-ribosyl)imidazole from N(2)-formyl-N(1)-(5-phospho-D-ribosyl)glycinamide: step 1/2.</text>
</comment>
<comment type="subunit">
    <text evidence="1">Monomer. Part of the FGAM synthase complex composed of 1 PurL, 1 PurQ and 2 PurS subunits.</text>
</comment>
<comment type="subcellular location">
    <subcellularLocation>
        <location evidence="1">Cytoplasm</location>
    </subcellularLocation>
</comment>
<comment type="similarity">
    <text evidence="1">Belongs to the FGAMS family.</text>
</comment>
<gene>
    <name evidence="1" type="primary">purL</name>
</gene>
<reference key="1">
    <citation type="submission" date="1997-04" db="EMBL/GenBank/DDBJ databases">
        <title>Sequence analysis of Corynebacterium ammoniagenes purL.</title>
        <authorList>
            <person name="Yonetani Y."/>
            <person name="Teshiba S."/>
        </authorList>
    </citation>
    <scope>NUCLEOTIDE SEQUENCE [GENOMIC DNA]</scope>
    <source>
        <strain>ATCC 6872 / DSM 20305 / IAM 1645 / KCTC 1019 / NCTC 2399</strain>
    </source>
</reference>
<organism>
    <name type="scientific">Corynebacterium ammoniagenes</name>
    <name type="common">Brevibacterium ammoniagenes</name>
    <dbReference type="NCBI Taxonomy" id="1697"/>
    <lineage>
        <taxon>Bacteria</taxon>
        <taxon>Bacillati</taxon>
        <taxon>Actinomycetota</taxon>
        <taxon>Actinomycetes</taxon>
        <taxon>Mycobacteriales</taxon>
        <taxon>Corynebacteriaceae</taxon>
        <taxon>Corynebacterium</taxon>
    </lineage>
</organism>
<feature type="chain" id="PRO_0000100450" description="Phosphoribosylformylglycinamidine synthase subunit PurL">
    <location>
        <begin position="1"/>
        <end position="758"/>
    </location>
</feature>
<feature type="active site" evidence="1">
    <location>
        <position position="57"/>
    </location>
</feature>
<feature type="active site" description="Proton acceptor" evidence="1">
    <location>
        <position position="108"/>
    </location>
</feature>
<feature type="binding site" evidence="1">
    <location>
        <position position="60"/>
    </location>
    <ligand>
        <name>ATP</name>
        <dbReference type="ChEBI" id="CHEBI:30616"/>
    </ligand>
</feature>
<feature type="binding site" evidence="1">
    <location>
        <position position="104"/>
    </location>
    <ligand>
        <name>ATP</name>
        <dbReference type="ChEBI" id="CHEBI:30616"/>
    </ligand>
</feature>
<feature type="binding site" evidence="1">
    <location>
        <position position="106"/>
    </location>
    <ligand>
        <name>Mg(2+)</name>
        <dbReference type="ChEBI" id="CHEBI:18420"/>
        <label>1</label>
    </ligand>
</feature>
<feature type="binding site" evidence="1">
    <location>
        <begin position="107"/>
        <end position="110"/>
    </location>
    <ligand>
        <name>substrate</name>
    </ligand>
</feature>
<feature type="binding site" evidence="1">
    <location>
        <position position="129"/>
    </location>
    <ligand>
        <name>substrate</name>
    </ligand>
</feature>
<feature type="binding site" evidence="1">
    <location>
        <position position="130"/>
    </location>
    <ligand>
        <name>Mg(2+)</name>
        <dbReference type="ChEBI" id="CHEBI:18420"/>
        <label>2</label>
    </ligand>
</feature>
<feature type="binding site" evidence="1">
    <location>
        <position position="254"/>
    </location>
    <ligand>
        <name>substrate</name>
    </ligand>
</feature>
<feature type="binding site" evidence="1">
    <location>
        <position position="282"/>
    </location>
    <ligand>
        <name>Mg(2+)</name>
        <dbReference type="ChEBI" id="CHEBI:18420"/>
        <label>2</label>
    </ligand>
</feature>
<feature type="binding site" evidence="1">
    <location>
        <begin position="326"/>
        <end position="328"/>
    </location>
    <ligand>
        <name>substrate</name>
    </ligand>
</feature>
<feature type="binding site" evidence="1">
    <location>
        <position position="509"/>
    </location>
    <ligand>
        <name>ATP</name>
        <dbReference type="ChEBI" id="CHEBI:30616"/>
    </ligand>
</feature>
<feature type="binding site" evidence="1">
    <location>
        <position position="546"/>
    </location>
    <ligand>
        <name>ATP</name>
        <dbReference type="ChEBI" id="CHEBI:30616"/>
    </ligand>
</feature>
<feature type="binding site" evidence="1">
    <location>
        <position position="547"/>
    </location>
    <ligand>
        <name>Mg(2+)</name>
        <dbReference type="ChEBI" id="CHEBI:18420"/>
        <label>1</label>
    </ligand>
</feature>
<feature type="binding site" evidence="1">
    <location>
        <position position="549"/>
    </location>
    <ligand>
        <name>substrate</name>
    </ligand>
</feature>
<accession>Q9RHW9</accession>
<dbReference type="EC" id="6.3.5.3" evidence="1"/>
<dbReference type="EMBL" id="AB003162">
    <property type="protein sequence ID" value="BAA89451.1"/>
    <property type="molecule type" value="Genomic_DNA"/>
</dbReference>
<dbReference type="SMR" id="Q9RHW9"/>
<dbReference type="UniPathway" id="UPA00074">
    <property type="reaction ID" value="UER00128"/>
</dbReference>
<dbReference type="GO" id="GO:0005737">
    <property type="term" value="C:cytoplasm"/>
    <property type="evidence" value="ECO:0007669"/>
    <property type="project" value="UniProtKB-SubCell"/>
</dbReference>
<dbReference type="GO" id="GO:0005524">
    <property type="term" value="F:ATP binding"/>
    <property type="evidence" value="ECO:0007669"/>
    <property type="project" value="UniProtKB-UniRule"/>
</dbReference>
<dbReference type="GO" id="GO:0000287">
    <property type="term" value="F:magnesium ion binding"/>
    <property type="evidence" value="ECO:0007669"/>
    <property type="project" value="UniProtKB-UniRule"/>
</dbReference>
<dbReference type="GO" id="GO:0004642">
    <property type="term" value="F:phosphoribosylformylglycinamidine synthase activity"/>
    <property type="evidence" value="ECO:0007669"/>
    <property type="project" value="UniProtKB-UniRule"/>
</dbReference>
<dbReference type="GO" id="GO:0006189">
    <property type="term" value="P:'de novo' IMP biosynthetic process"/>
    <property type="evidence" value="ECO:0007669"/>
    <property type="project" value="UniProtKB-UniRule"/>
</dbReference>
<dbReference type="CDD" id="cd02203">
    <property type="entry name" value="PurL_repeat1"/>
    <property type="match status" value="1"/>
</dbReference>
<dbReference type="CDD" id="cd02204">
    <property type="entry name" value="PurL_repeat2"/>
    <property type="match status" value="1"/>
</dbReference>
<dbReference type="FunFam" id="3.30.1330.10:FF:000004">
    <property type="entry name" value="Phosphoribosylformylglycinamidine synthase subunit PurL"/>
    <property type="match status" value="1"/>
</dbReference>
<dbReference type="Gene3D" id="3.90.650.10">
    <property type="entry name" value="PurM-like C-terminal domain"/>
    <property type="match status" value="2"/>
</dbReference>
<dbReference type="Gene3D" id="3.30.1330.10">
    <property type="entry name" value="PurM-like, N-terminal domain"/>
    <property type="match status" value="2"/>
</dbReference>
<dbReference type="HAMAP" id="MF_00420">
    <property type="entry name" value="PurL_2"/>
    <property type="match status" value="1"/>
</dbReference>
<dbReference type="InterPro" id="IPR010074">
    <property type="entry name" value="PRibForGlyAmidine_synth_PurL"/>
</dbReference>
<dbReference type="InterPro" id="IPR041609">
    <property type="entry name" value="PurL_linker"/>
</dbReference>
<dbReference type="InterPro" id="IPR010918">
    <property type="entry name" value="PurM-like_C_dom"/>
</dbReference>
<dbReference type="InterPro" id="IPR036676">
    <property type="entry name" value="PurM-like_C_sf"/>
</dbReference>
<dbReference type="InterPro" id="IPR016188">
    <property type="entry name" value="PurM-like_N"/>
</dbReference>
<dbReference type="InterPro" id="IPR036921">
    <property type="entry name" value="PurM-like_N_sf"/>
</dbReference>
<dbReference type="NCBIfam" id="TIGR01736">
    <property type="entry name" value="FGAM_synth_II"/>
    <property type="match status" value="1"/>
</dbReference>
<dbReference type="NCBIfam" id="NF002290">
    <property type="entry name" value="PRK01213.1"/>
    <property type="match status" value="1"/>
</dbReference>
<dbReference type="PANTHER" id="PTHR43555">
    <property type="entry name" value="PHOSPHORIBOSYLFORMYLGLYCINAMIDINE SYNTHASE SUBUNIT PURL"/>
    <property type="match status" value="1"/>
</dbReference>
<dbReference type="PANTHER" id="PTHR43555:SF1">
    <property type="entry name" value="PHOSPHORIBOSYLFORMYLGLYCINAMIDINE SYNTHASE SUBUNIT PURL"/>
    <property type="match status" value="1"/>
</dbReference>
<dbReference type="Pfam" id="PF00586">
    <property type="entry name" value="AIRS"/>
    <property type="match status" value="2"/>
</dbReference>
<dbReference type="Pfam" id="PF02769">
    <property type="entry name" value="AIRS_C"/>
    <property type="match status" value="2"/>
</dbReference>
<dbReference type="Pfam" id="PF18072">
    <property type="entry name" value="FGAR-AT_linker"/>
    <property type="match status" value="1"/>
</dbReference>
<dbReference type="PIRSF" id="PIRSF001587">
    <property type="entry name" value="FGAM_synthase_II"/>
    <property type="match status" value="1"/>
</dbReference>
<dbReference type="SUPFAM" id="SSF56042">
    <property type="entry name" value="PurM C-terminal domain-like"/>
    <property type="match status" value="2"/>
</dbReference>
<dbReference type="SUPFAM" id="SSF55326">
    <property type="entry name" value="PurM N-terminal domain-like"/>
    <property type="match status" value="2"/>
</dbReference>
<sequence>MTVSNDTVDNAKATPELDQPWEELGLKQDEYDKIVGILGRRPTDAELTVYSVMWSEHCSYKSSKTHLRYFGETTTEEMASKILAGIGENAGVVDIGDGDAVTFRVESHNHPSFVEPYQGAATGVGGIVRDIMAMGARPIAVMDQLRFGPADAPDTARVLPGVVSGIGGYGNSLGLPNIGGETVFDESYAGNPLVNALCVGTLRVEDLKLAFASGTGNKVMLFGSRTGLDGIGGVSVLGSASFEEGEERKLPAVQVGDPFAEKVLIECCLELYAAGVVVGIQDLGGGGLACATSELAAAGDGGMVVNLDNVPLRAENMSAAEILASESQERMCAVVSPDNVEKFREICEKWDVTCAEIGEVTDKKDTYLVYHNGELVVDAPPSTIDEGPVYERPYARPQWQDEIQQAPEIARPESLVQAFKDMVSSPALSSRAFITEQYDRYVRGNTVKAKQSDSGVLRINEETSRGVAISADGSGRYTKLDPNMGARLALAEAYRNVAVTGARPYAVTNCLNFGSPENTDVMWQFREAVHGLADGSKELNIPVSGGNVSFYNQTGDEPILPTPVVGVLGVIDDVHKALAHDLGGIDEPETLILLGETKEEFGGSIWQQVSGGGLQGLPPQVDLANEAKLADFFVGNTSVAASHDLSEGGLAIAAFEMAQKNNVGVDLDLSVVHEDALTALFSESASRVLISTASDHLDGILQRASELGIPAVVVGTTNDSGNITFAGEEVATAELREAWSATLPNLFGHAVGANSVVE</sequence>
<proteinExistence type="inferred from homology"/>
<name>PURL_CORAM</name>
<evidence type="ECO:0000255" key="1">
    <source>
        <dbReference type="HAMAP-Rule" id="MF_00420"/>
    </source>
</evidence>